<name>RR17_SPIOL</name>
<evidence type="ECO:0000255" key="1"/>
<evidence type="ECO:0000256" key="2">
    <source>
        <dbReference type="SAM" id="MobiDB-lite"/>
    </source>
</evidence>
<evidence type="ECO:0000269" key="3">
    <source>
    </source>
</evidence>
<evidence type="ECO:0000269" key="4">
    <source>
    </source>
</evidence>
<evidence type="ECO:0000303" key="5">
    <source>
    </source>
</evidence>
<evidence type="ECO:0000303" key="6">
    <source>
    </source>
</evidence>
<evidence type="ECO:0000305" key="7">
    <source>
    </source>
</evidence>
<evidence type="ECO:0000305" key="8">
    <source>
    </source>
</evidence>
<keyword id="KW-0002">3D-structure</keyword>
<keyword id="KW-0150">Chloroplast</keyword>
<keyword id="KW-0903">Direct protein sequencing</keyword>
<keyword id="KW-0934">Plastid</keyword>
<keyword id="KW-1185">Reference proteome</keyword>
<keyword id="KW-0687">Ribonucleoprotein</keyword>
<keyword id="KW-0689">Ribosomal protein</keyword>
<keyword id="KW-0694">RNA-binding</keyword>
<keyword id="KW-0699">rRNA-binding</keyword>
<keyword id="KW-0809">Transit peptide</keyword>
<comment type="function">
    <text evidence="7 8">Component of the chloroplast ribosome (chloro-ribosome), a dedicated translation machinery responsible for the synthesis of chloroplast genome-encoded proteins, including proteins of the transcription and translation machinery and components of the photosynthetic apparatus.</text>
</comment>
<comment type="subunit">
    <text evidence="3 4">Component of the chloroplast small ribosomal subunit (SSU). Mature 70S chloroplast ribosomes of higher plants consist of a small (30S) and a large (50S) subunit. The 30S small subunit contains 1 molecule of ribosomal RNA (16S rRNA) and 24 different proteins. The 50S large subunit contains 3 rRNA molecules (23S, 5S and 4.5S rRNA) and 33 different proteins.</text>
</comment>
<comment type="subcellular location">
    <subcellularLocation>
        <location evidence="3 4">Plastid</location>
        <location evidence="3 4">Chloroplast</location>
    </subcellularLocation>
</comment>
<comment type="mass spectrometry" mass="12354.0" method="Electrospray" evidence="3"/>
<comment type="mass spectrometry" mass="12354.0" method="MALDI" evidence="3"/>
<comment type="similarity">
    <text evidence="1">Belongs to the universal ribosomal protein uS17 family.</text>
</comment>
<proteinExistence type="evidence at protein level"/>
<reference key="1">
    <citation type="journal article" date="2014" name="Nature">
        <title>The genome of the recently domesticated crop plant sugar beet (Beta vulgaris).</title>
        <authorList>
            <person name="Dohm J.C."/>
            <person name="Minoche A.E."/>
            <person name="Holtgraewe D."/>
            <person name="Capella-Gutierrez S."/>
            <person name="Zakrzewski F."/>
            <person name="Tafer H."/>
            <person name="Rupp O."/>
            <person name="Soerensen T.R."/>
            <person name="Stracke R."/>
            <person name="Reinhardt R."/>
            <person name="Goesmann A."/>
            <person name="Kraft T."/>
            <person name="Schulz B."/>
            <person name="Stadler P.F."/>
            <person name="Schmidt T."/>
            <person name="Gabaldon T."/>
            <person name="Lehrach H."/>
            <person name="Weisshaar B."/>
            <person name="Himmelbauer H."/>
        </authorList>
    </citation>
    <scope>NUCLEOTIDE SEQUENCE [LARGE SCALE GENOMIC DNA]</scope>
    <source>
        <strain>cv. Viroflay</strain>
        <tissue>Leaf</tissue>
    </source>
</reference>
<reference key="2">
    <citation type="journal article" date="2000" name="J. Biol. Chem.">
        <title>The plastid ribosomal proteins. Identification of all the proteins in the 30S subunit of an organelle ribosome (chloroplast).</title>
        <authorList>
            <person name="Yamaguchi K."/>
            <person name="von Knoblauch K."/>
            <person name="Subramanian A.R."/>
        </authorList>
    </citation>
    <scope>PROTEIN SEQUENCE OF 58-91</scope>
    <scope>SUBUNIT</scope>
    <scope>SUBCELLULAR LOCATION</scope>
    <scope>MASS SPECTROMETRY</scope>
    <source>
        <strain>cv. Alwaro</strain>
        <tissue>Leaf</tissue>
    </source>
</reference>
<reference key="3">
    <citation type="journal article" date="2007" name="Proc. Natl. Acad. Sci. U.S.A.">
        <title>Cryo-EM study of the spinach chloroplast ribosome reveals the structural and functional roles of plastid-specific ribosomal proteins.</title>
        <authorList>
            <person name="Sharma M.R."/>
            <person name="Wilson D.N."/>
            <person name="Datta P.P."/>
            <person name="Barat C."/>
            <person name="Schluenzen F."/>
            <person name="Fucini P."/>
            <person name="Agrawal R.K."/>
        </authorList>
    </citation>
    <scope>STRUCTURE BY ELECTRON MICROSCOPY (9.4 ANGSTROMS)</scope>
</reference>
<reference key="4">
    <citation type="journal article" date="2017" name="EMBO J.">
        <title>The complete structure of the chloroplast 70S ribosome in complex with translation factor pY.</title>
        <authorList>
            <person name="Bieri P."/>
            <person name="Leibundgut M."/>
            <person name="Saurer M."/>
            <person name="Boehringer D."/>
            <person name="Ban N."/>
        </authorList>
    </citation>
    <scope>STRUCTURE BY ELECTRON MICROSCOPY (3.40 ANGSTROMS)</scope>
    <scope>SUBUNIT</scope>
    <scope>SUBCELLULAR LOCATION</scope>
</reference>
<gene>
    <name type="primary">RPS17</name>
    <name type="ORF">SOVF_042540</name>
</gene>
<organism>
    <name type="scientific">Spinacia oleracea</name>
    <name type="common">Spinach</name>
    <dbReference type="NCBI Taxonomy" id="3562"/>
    <lineage>
        <taxon>Eukaryota</taxon>
        <taxon>Viridiplantae</taxon>
        <taxon>Streptophyta</taxon>
        <taxon>Embryophyta</taxon>
        <taxon>Tracheophyta</taxon>
        <taxon>Spermatophyta</taxon>
        <taxon>Magnoliopsida</taxon>
        <taxon>eudicotyledons</taxon>
        <taxon>Gunneridae</taxon>
        <taxon>Pentapetalae</taxon>
        <taxon>Caryophyllales</taxon>
        <taxon>Chenopodiaceae</taxon>
        <taxon>Chenopodioideae</taxon>
        <taxon>Anserineae</taxon>
        <taxon>Spinacia</taxon>
    </lineage>
</organism>
<feature type="transit peptide" description="Chloroplast" evidence="3">
    <location>
        <begin position="1"/>
        <end position="57"/>
    </location>
</feature>
<feature type="chain" id="PRO_0000249414" description="Small ribosomal subunit protein uS17c">
    <location>
        <begin position="58"/>
        <end position="165"/>
    </location>
</feature>
<feature type="region of interest" description="Disordered" evidence="2">
    <location>
        <begin position="128"/>
        <end position="165"/>
    </location>
</feature>
<sequence length="165" mass="18124">MSLSFSLLKPPLSSSNPNPFLHGTTTKLSLLPSFSALSLSSSPPSSSTTYTFPVIKAMRSMQGKVICATNDKTVNVEVVRLAPHPKYKRRVRKKKKYQAHDPDNQFKVGDWVQLDKCRPISKTKTFLAVAPEGRQSSATRPKPIQAASDELGIPLESQVEGDKTV</sequence>
<protein>
    <recommendedName>
        <fullName evidence="6">Small ribosomal subunit protein uS17c</fullName>
    </recommendedName>
    <alternativeName>
        <fullName evidence="5">30S ribosomal protein S17, chloroplastic</fullName>
    </alternativeName>
</protein>
<dbReference type="EMBL" id="KQ137215">
    <property type="protein sequence ID" value="KNA21507.1"/>
    <property type="molecule type" value="Genomic_DNA"/>
</dbReference>
<dbReference type="PDB" id="4V61">
    <property type="method" value="EM"/>
    <property type="resolution" value="9.40 A"/>
    <property type="chains" value="Q=67-91"/>
</dbReference>
<dbReference type="PDB" id="5MMJ">
    <property type="method" value="EM"/>
    <property type="resolution" value="3.65 A"/>
    <property type="chains" value="q=1-165"/>
</dbReference>
<dbReference type="PDB" id="5MMM">
    <property type="method" value="EM"/>
    <property type="resolution" value="3.40 A"/>
    <property type="chains" value="q=1-165"/>
</dbReference>
<dbReference type="PDB" id="5X8P">
    <property type="method" value="EM"/>
    <property type="resolution" value="3.40 A"/>
    <property type="chains" value="q=58-165"/>
</dbReference>
<dbReference type="PDB" id="5X8R">
    <property type="method" value="EM"/>
    <property type="resolution" value="3.70 A"/>
    <property type="chains" value="q=58-165"/>
</dbReference>
<dbReference type="PDB" id="6ERI">
    <property type="method" value="EM"/>
    <property type="resolution" value="3.00 A"/>
    <property type="chains" value="BQ=58-141"/>
</dbReference>
<dbReference type="PDBsum" id="4V61"/>
<dbReference type="PDBsum" id="5MMJ"/>
<dbReference type="PDBsum" id="5MMM"/>
<dbReference type="PDBsum" id="5X8P"/>
<dbReference type="PDBsum" id="5X8R"/>
<dbReference type="PDBsum" id="6ERI"/>
<dbReference type="EMDB" id="EMD-3532"/>
<dbReference type="EMDB" id="EMD-3533"/>
<dbReference type="EMDB" id="EMD-3941"/>
<dbReference type="EMDB" id="EMD-6709"/>
<dbReference type="EMDB" id="EMD-6710"/>
<dbReference type="SMR" id="P82137"/>
<dbReference type="STRING" id="3562.P82137"/>
<dbReference type="OrthoDB" id="274752at2759"/>
<dbReference type="Proteomes" id="UP001155700">
    <property type="component" value="Unplaced"/>
</dbReference>
<dbReference type="GO" id="GO:0009507">
    <property type="term" value="C:chloroplast"/>
    <property type="evidence" value="ECO:0007669"/>
    <property type="project" value="UniProtKB-SubCell"/>
</dbReference>
<dbReference type="GO" id="GO:1990904">
    <property type="term" value="C:ribonucleoprotein complex"/>
    <property type="evidence" value="ECO:0007669"/>
    <property type="project" value="UniProtKB-KW"/>
</dbReference>
<dbReference type="GO" id="GO:0005840">
    <property type="term" value="C:ribosome"/>
    <property type="evidence" value="ECO:0007669"/>
    <property type="project" value="UniProtKB-KW"/>
</dbReference>
<dbReference type="GO" id="GO:0019843">
    <property type="term" value="F:rRNA binding"/>
    <property type="evidence" value="ECO:0007669"/>
    <property type="project" value="UniProtKB-KW"/>
</dbReference>
<dbReference type="GO" id="GO:0003735">
    <property type="term" value="F:structural constituent of ribosome"/>
    <property type="evidence" value="ECO:0000318"/>
    <property type="project" value="GO_Central"/>
</dbReference>
<dbReference type="GO" id="GO:0006412">
    <property type="term" value="P:translation"/>
    <property type="evidence" value="ECO:0007669"/>
    <property type="project" value="InterPro"/>
</dbReference>
<dbReference type="CDD" id="cd00364">
    <property type="entry name" value="Ribosomal_uS17"/>
    <property type="match status" value="1"/>
</dbReference>
<dbReference type="Gene3D" id="2.40.50.140">
    <property type="entry name" value="Nucleic acid-binding proteins"/>
    <property type="match status" value="1"/>
</dbReference>
<dbReference type="HAMAP" id="MF_01345_B">
    <property type="entry name" value="Ribosomal_uS17_B"/>
    <property type="match status" value="1"/>
</dbReference>
<dbReference type="InterPro" id="IPR012340">
    <property type="entry name" value="NA-bd_OB-fold"/>
</dbReference>
<dbReference type="InterPro" id="IPR000266">
    <property type="entry name" value="Ribosomal_uS17"/>
</dbReference>
<dbReference type="InterPro" id="IPR019984">
    <property type="entry name" value="Ribosomal_uS17_bact/chlr"/>
</dbReference>
<dbReference type="InterPro" id="IPR019979">
    <property type="entry name" value="Ribosomal_uS17_CS"/>
</dbReference>
<dbReference type="NCBIfam" id="NF004123">
    <property type="entry name" value="PRK05610.1"/>
    <property type="match status" value="1"/>
</dbReference>
<dbReference type="PANTHER" id="PTHR10744">
    <property type="entry name" value="40S RIBOSOMAL PROTEIN S11 FAMILY MEMBER"/>
    <property type="match status" value="1"/>
</dbReference>
<dbReference type="PANTHER" id="PTHR10744:SF7">
    <property type="entry name" value="SMALL RIBOSOMAL SUBUNIT PROTEIN US17C"/>
    <property type="match status" value="1"/>
</dbReference>
<dbReference type="Pfam" id="PF00366">
    <property type="entry name" value="Ribosomal_S17"/>
    <property type="match status" value="1"/>
</dbReference>
<dbReference type="PRINTS" id="PR00973">
    <property type="entry name" value="RIBOSOMALS17"/>
</dbReference>
<dbReference type="SUPFAM" id="SSF50249">
    <property type="entry name" value="Nucleic acid-binding proteins"/>
    <property type="match status" value="1"/>
</dbReference>
<dbReference type="PROSITE" id="PS00056">
    <property type="entry name" value="RIBOSOMAL_S17"/>
    <property type="match status" value="1"/>
</dbReference>
<accession>P82137</accession>
<accession>A0A0K9RRR0</accession>